<dbReference type="EC" id="4.1.99.22" evidence="1"/>
<dbReference type="EMBL" id="CP000724">
    <property type="protein sequence ID" value="ABR50177.1"/>
    <property type="molecule type" value="Genomic_DNA"/>
</dbReference>
<dbReference type="RefSeq" id="WP_012065125.1">
    <property type="nucleotide sequence ID" value="NC_009633.1"/>
</dbReference>
<dbReference type="SMR" id="A6TVF9"/>
<dbReference type="STRING" id="293826.Amet_4096"/>
<dbReference type="KEGG" id="amt:Amet_4096"/>
<dbReference type="eggNOG" id="COG2896">
    <property type="taxonomic scope" value="Bacteria"/>
</dbReference>
<dbReference type="HOGENOM" id="CLU_009273_0_1_9"/>
<dbReference type="OrthoDB" id="9763993at2"/>
<dbReference type="UniPathway" id="UPA00344"/>
<dbReference type="Proteomes" id="UP000001572">
    <property type="component" value="Chromosome"/>
</dbReference>
<dbReference type="GO" id="GO:0051539">
    <property type="term" value="F:4 iron, 4 sulfur cluster binding"/>
    <property type="evidence" value="ECO:0007669"/>
    <property type="project" value="UniProtKB-UniRule"/>
</dbReference>
<dbReference type="GO" id="GO:0061799">
    <property type="term" value="F:cyclic pyranopterin monophosphate synthase activity"/>
    <property type="evidence" value="ECO:0007669"/>
    <property type="project" value="TreeGrafter"/>
</dbReference>
<dbReference type="GO" id="GO:0061798">
    <property type="term" value="F:GTP 3',8'-cyclase activity"/>
    <property type="evidence" value="ECO:0007669"/>
    <property type="project" value="UniProtKB-UniRule"/>
</dbReference>
<dbReference type="GO" id="GO:0005525">
    <property type="term" value="F:GTP binding"/>
    <property type="evidence" value="ECO:0007669"/>
    <property type="project" value="UniProtKB-UniRule"/>
</dbReference>
<dbReference type="GO" id="GO:0046872">
    <property type="term" value="F:metal ion binding"/>
    <property type="evidence" value="ECO:0007669"/>
    <property type="project" value="UniProtKB-KW"/>
</dbReference>
<dbReference type="GO" id="GO:1904047">
    <property type="term" value="F:S-adenosyl-L-methionine binding"/>
    <property type="evidence" value="ECO:0007669"/>
    <property type="project" value="UniProtKB-UniRule"/>
</dbReference>
<dbReference type="GO" id="GO:0006777">
    <property type="term" value="P:Mo-molybdopterin cofactor biosynthetic process"/>
    <property type="evidence" value="ECO:0007669"/>
    <property type="project" value="UniProtKB-UniRule"/>
</dbReference>
<dbReference type="CDD" id="cd01335">
    <property type="entry name" value="Radical_SAM"/>
    <property type="match status" value="1"/>
</dbReference>
<dbReference type="CDD" id="cd21117">
    <property type="entry name" value="Twitch_MoaA"/>
    <property type="match status" value="1"/>
</dbReference>
<dbReference type="Gene3D" id="3.20.20.70">
    <property type="entry name" value="Aldolase class I"/>
    <property type="match status" value="1"/>
</dbReference>
<dbReference type="HAMAP" id="MF_01225_B">
    <property type="entry name" value="MoaA_B"/>
    <property type="match status" value="1"/>
</dbReference>
<dbReference type="InterPro" id="IPR013785">
    <property type="entry name" value="Aldolase_TIM"/>
</dbReference>
<dbReference type="InterPro" id="IPR006638">
    <property type="entry name" value="Elp3/MiaA/NifB-like_rSAM"/>
</dbReference>
<dbReference type="InterPro" id="IPR013483">
    <property type="entry name" value="MoaA"/>
</dbReference>
<dbReference type="InterPro" id="IPR000385">
    <property type="entry name" value="MoaA_NifB_PqqE_Fe-S-bd_CS"/>
</dbReference>
<dbReference type="InterPro" id="IPR010505">
    <property type="entry name" value="MoaA_twitch"/>
</dbReference>
<dbReference type="InterPro" id="IPR050105">
    <property type="entry name" value="MoCo_biosynth_MoaA/MoaC"/>
</dbReference>
<dbReference type="InterPro" id="IPR007197">
    <property type="entry name" value="rSAM"/>
</dbReference>
<dbReference type="NCBIfam" id="TIGR02666">
    <property type="entry name" value="moaA"/>
    <property type="match status" value="1"/>
</dbReference>
<dbReference type="NCBIfam" id="NF001199">
    <property type="entry name" value="PRK00164.2-1"/>
    <property type="match status" value="1"/>
</dbReference>
<dbReference type="PANTHER" id="PTHR22960:SF0">
    <property type="entry name" value="MOLYBDENUM COFACTOR BIOSYNTHESIS PROTEIN 1"/>
    <property type="match status" value="1"/>
</dbReference>
<dbReference type="PANTHER" id="PTHR22960">
    <property type="entry name" value="MOLYBDOPTERIN COFACTOR SYNTHESIS PROTEIN A"/>
    <property type="match status" value="1"/>
</dbReference>
<dbReference type="Pfam" id="PF13353">
    <property type="entry name" value="Fer4_12"/>
    <property type="match status" value="1"/>
</dbReference>
<dbReference type="Pfam" id="PF06463">
    <property type="entry name" value="Mob_synth_C"/>
    <property type="match status" value="1"/>
</dbReference>
<dbReference type="Pfam" id="PF04055">
    <property type="entry name" value="Radical_SAM"/>
    <property type="match status" value="1"/>
</dbReference>
<dbReference type="SFLD" id="SFLDG01383">
    <property type="entry name" value="cyclic_pyranopterin_phosphate"/>
    <property type="match status" value="1"/>
</dbReference>
<dbReference type="SFLD" id="SFLDS00029">
    <property type="entry name" value="Radical_SAM"/>
    <property type="match status" value="1"/>
</dbReference>
<dbReference type="SMART" id="SM00729">
    <property type="entry name" value="Elp3"/>
    <property type="match status" value="1"/>
</dbReference>
<dbReference type="SUPFAM" id="SSF102114">
    <property type="entry name" value="Radical SAM enzymes"/>
    <property type="match status" value="1"/>
</dbReference>
<dbReference type="PROSITE" id="PS01305">
    <property type="entry name" value="MOAA_NIFB_PQQE"/>
    <property type="match status" value="1"/>
</dbReference>
<dbReference type="PROSITE" id="PS51918">
    <property type="entry name" value="RADICAL_SAM"/>
    <property type="match status" value="1"/>
</dbReference>
<proteinExistence type="inferred from homology"/>
<protein>
    <recommendedName>
        <fullName evidence="1">GTP 3',8-cyclase</fullName>
        <ecNumber evidence="1">4.1.99.22</ecNumber>
    </recommendedName>
    <alternativeName>
        <fullName evidence="1">Molybdenum cofactor biosynthesis protein A</fullName>
    </alternativeName>
</protein>
<comment type="function">
    <text evidence="1">Catalyzes the cyclization of GTP to (8S)-3',8-cyclo-7,8-dihydroguanosine 5'-triphosphate.</text>
</comment>
<comment type="catalytic activity">
    <reaction evidence="1">
        <text>GTP + AH2 + S-adenosyl-L-methionine = (8S)-3',8-cyclo-7,8-dihydroguanosine 5'-triphosphate + 5'-deoxyadenosine + L-methionine + A + H(+)</text>
        <dbReference type="Rhea" id="RHEA:49576"/>
        <dbReference type="ChEBI" id="CHEBI:13193"/>
        <dbReference type="ChEBI" id="CHEBI:15378"/>
        <dbReference type="ChEBI" id="CHEBI:17319"/>
        <dbReference type="ChEBI" id="CHEBI:17499"/>
        <dbReference type="ChEBI" id="CHEBI:37565"/>
        <dbReference type="ChEBI" id="CHEBI:57844"/>
        <dbReference type="ChEBI" id="CHEBI:59789"/>
        <dbReference type="ChEBI" id="CHEBI:131766"/>
        <dbReference type="EC" id="4.1.99.22"/>
    </reaction>
</comment>
<comment type="cofactor">
    <cofactor evidence="1">
        <name>[4Fe-4S] cluster</name>
        <dbReference type="ChEBI" id="CHEBI:49883"/>
    </cofactor>
    <text evidence="1">Binds 2 [4Fe-4S] clusters. Binds 1 [4Fe-4S] cluster coordinated with 3 cysteines and an exchangeable S-adenosyl-L-methionine and 1 [4Fe-4S] cluster coordinated with 3 cysteines and the GTP-derived substrate.</text>
</comment>
<comment type="pathway">
    <text evidence="1">Cofactor biosynthesis; molybdopterin biosynthesis.</text>
</comment>
<comment type="subunit">
    <text evidence="1">Monomer and homodimer.</text>
</comment>
<comment type="similarity">
    <text evidence="1">Belongs to the radical SAM superfamily. MoaA family.</text>
</comment>
<reference key="1">
    <citation type="journal article" date="2016" name="Genome Announc.">
        <title>Complete genome sequence of Alkaliphilus metalliredigens strain QYMF, an alkaliphilic and metal-reducing bacterium isolated from borax-contaminated leachate ponds.</title>
        <authorList>
            <person name="Hwang C."/>
            <person name="Copeland A."/>
            <person name="Lucas S."/>
            <person name="Lapidus A."/>
            <person name="Barry K."/>
            <person name="Detter J.C."/>
            <person name="Glavina Del Rio T."/>
            <person name="Hammon N."/>
            <person name="Israni S."/>
            <person name="Dalin E."/>
            <person name="Tice H."/>
            <person name="Pitluck S."/>
            <person name="Chertkov O."/>
            <person name="Brettin T."/>
            <person name="Bruce D."/>
            <person name="Han C."/>
            <person name="Schmutz J."/>
            <person name="Larimer F."/>
            <person name="Land M.L."/>
            <person name="Hauser L."/>
            <person name="Kyrpides N."/>
            <person name="Mikhailova N."/>
            <person name="Ye Q."/>
            <person name="Zhou J."/>
            <person name="Richardson P."/>
            <person name="Fields M.W."/>
        </authorList>
    </citation>
    <scope>NUCLEOTIDE SEQUENCE [LARGE SCALE GENOMIC DNA]</scope>
    <source>
        <strain>QYMF</strain>
    </source>
</reference>
<evidence type="ECO:0000255" key="1">
    <source>
        <dbReference type="HAMAP-Rule" id="MF_01225"/>
    </source>
</evidence>
<evidence type="ECO:0000255" key="2">
    <source>
        <dbReference type="PROSITE-ProRule" id="PRU01266"/>
    </source>
</evidence>
<name>MOAA_ALKMQ</name>
<accession>A6TVF9</accession>
<organism>
    <name type="scientific">Alkaliphilus metalliredigens (strain QYMF)</name>
    <dbReference type="NCBI Taxonomy" id="293826"/>
    <lineage>
        <taxon>Bacteria</taxon>
        <taxon>Bacillati</taxon>
        <taxon>Bacillota</taxon>
        <taxon>Clostridia</taxon>
        <taxon>Peptostreptococcales</taxon>
        <taxon>Natronincolaceae</taxon>
        <taxon>Alkaliphilus</taxon>
    </lineage>
</organism>
<gene>
    <name evidence="1" type="primary">moaA</name>
    <name type="ordered locus">Amet_4096</name>
</gene>
<feature type="chain" id="PRO_1000066805" description="GTP 3',8-cyclase">
    <location>
        <begin position="1"/>
        <end position="320"/>
    </location>
</feature>
<feature type="domain" description="Radical SAM core" evidence="2">
    <location>
        <begin position="4"/>
        <end position="226"/>
    </location>
</feature>
<feature type="binding site" evidence="1">
    <location>
        <position position="13"/>
    </location>
    <ligand>
        <name>GTP</name>
        <dbReference type="ChEBI" id="CHEBI:37565"/>
    </ligand>
</feature>
<feature type="binding site" evidence="1">
    <location>
        <position position="20"/>
    </location>
    <ligand>
        <name>[4Fe-4S] cluster</name>
        <dbReference type="ChEBI" id="CHEBI:49883"/>
        <label>1</label>
        <note>4Fe-4S-S-AdoMet</note>
    </ligand>
</feature>
<feature type="binding site" evidence="1">
    <location>
        <position position="24"/>
    </location>
    <ligand>
        <name>[4Fe-4S] cluster</name>
        <dbReference type="ChEBI" id="CHEBI:49883"/>
        <label>1</label>
        <note>4Fe-4S-S-AdoMet</note>
    </ligand>
</feature>
<feature type="binding site" evidence="1">
    <location>
        <position position="26"/>
    </location>
    <ligand>
        <name>S-adenosyl-L-methionine</name>
        <dbReference type="ChEBI" id="CHEBI:59789"/>
    </ligand>
</feature>
<feature type="binding site" evidence="1">
    <location>
        <position position="27"/>
    </location>
    <ligand>
        <name>[4Fe-4S] cluster</name>
        <dbReference type="ChEBI" id="CHEBI:49883"/>
        <label>1</label>
        <note>4Fe-4S-S-AdoMet</note>
    </ligand>
</feature>
<feature type="binding site" evidence="1">
    <location>
        <position position="63"/>
    </location>
    <ligand>
        <name>GTP</name>
        <dbReference type="ChEBI" id="CHEBI:37565"/>
    </ligand>
</feature>
<feature type="binding site" evidence="1">
    <location>
        <position position="67"/>
    </location>
    <ligand>
        <name>S-adenosyl-L-methionine</name>
        <dbReference type="ChEBI" id="CHEBI:59789"/>
    </ligand>
</feature>
<feature type="binding site" evidence="1">
    <location>
        <position position="94"/>
    </location>
    <ligand>
        <name>GTP</name>
        <dbReference type="ChEBI" id="CHEBI:37565"/>
    </ligand>
</feature>
<feature type="binding site" evidence="1">
    <location>
        <position position="118"/>
    </location>
    <ligand>
        <name>S-adenosyl-L-methionine</name>
        <dbReference type="ChEBI" id="CHEBI:59789"/>
    </ligand>
</feature>
<feature type="binding site" evidence="1">
    <location>
        <position position="155"/>
    </location>
    <ligand>
        <name>GTP</name>
        <dbReference type="ChEBI" id="CHEBI:37565"/>
    </ligand>
</feature>
<feature type="binding site" evidence="1">
    <location>
        <position position="189"/>
    </location>
    <ligand>
        <name>S-adenosyl-L-methionine</name>
        <dbReference type="ChEBI" id="CHEBI:59789"/>
    </ligand>
</feature>
<feature type="binding site" evidence="1">
    <location>
        <position position="249"/>
    </location>
    <ligand>
        <name>[4Fe-4S] cluster</name>
        <dbReference type="ChEBI" id="CHEBI:49883"/>
        <label>2</label>
        <note>4Fe-4S-substrate</note>
    </ligand>
</feature>
<feature type="binding site" evidence="1">
    <location>
        <position position="252"/>
    </location>
    <ligand>
        <name>[4Fe-4S] cluster</name>
        <dbReference type="ChEBI" id="CHEBI:49883"/>
        <label>2</label>
        <note>4Fe-4S-substrate</note>
    </ligand>
</feature>
<feature type="binding site" evidence="1">
    <location>
        <begin position="254"/>
        <end position="256"/>
    </location>
    <ligand>
        <name>GTP</name>
        <dbReference type="ChEBI" id="CHEBI:37565"/>
    </ligand>
</feature>
<feature type="binding site" evidence="1">
    <location>
        <position position="266"/>
    </location>
    <ligand>
        <name>[4Fe-4S] cluster</name>
        <dbReference type="ChEBI" id="CHEBI:49883"/>
        <label>2</label>
        <note>4Fe-4S-substrate</note>
    </ligand>
</feature>
<sequence>MKDTFQRSINYMRISITDLCNLRCQYCMPEKGIYKKTHQDILTLEEIEQIVRIGAENGINKVRITGGEPLVRKGVIGLIKNISNIPGIQDIALTTNGLLIKKYGEALKDAGLKRINISIDSLRPDRYKEITRGGDLSQVLEGIQEALRLGMTPVKLNVVVIGGYNEDEIEDFANLTVDDPIDVRFIELMPIGEASGWAKDRFLSNEEVKSKIEGLVPIITDATSPARLYRLPGAKGRVGFINPISSHFCESCNRIRVTSDGKLKPCLHSNHEIDLLRVARENPEQIGAVLSNGIQLKPEKHYLYTNKHEMSARSMSEIGG</sequence>
<keyword id="KW-0004">4Fe-4S</keyword>
<keyword id="KW-0342">GTP-binding</keyword>
<keyword id="KW-0408">Iron</keyword>
<keyword id="KW-0411">Iron-sulfur</keyword>
<keyword id="KW-0456">Lyase</keyword>
<keyword id="KW-0479">Metal-binding</keyword>
<keyword id="KW-0501">Molybdenum cofactor biosynthesis</keyword>
<keyword id="KW-0547">Nucleotide-binding</keyword>
<keyword id="KW-1185">Reference proteome</keyword>
<keyword id="KW-0949">S-adenosyl-L-methionine</keyword>